<keyword id="KW-0963">Cytoplasm</keyword>
<keyword id="KW-0238">DNA-binding</keyword>
<keyword id="KW-0804">Transcription</keyword>
<keyword id="KW-0805">Transcription regulation</keyword>
<evidence type="ECO:0000255" key="1">
    <source>
        <dbReference type="PROSITE-ProRule" id="PRU00112"/>
    </source>
</evidence>
<evidence type="ECO:0000305" key="2"/>
<organism>
    <name type="scientific">Staphylococcus aureus (strain MSSA476)</name>
    <dbReference type="NCBI Taxonomy" id="282459"/>
    <lineage>
        <taxon>Bacteria</taxon>
        <taxon>Bacillati</taxon>
        <taxon>Bacillota</taxon>
        <taxon>Bacilli</taxon>
        <taxon>Bacillales</taxon>
        <taxon>Staphylococcaceae</taxon>
        <taxon>Staphylococcus</taxon>
    </lineage>
</organism>
<dbReference type="EMBL" id="BX571857">
    <property type="protein sequence ID" value="CAG44067.1"/>
    <property type="molecule type" value="Genomic_DNA"/>
</dbReference>
<dbReference type="RefSeq" id="WP_000977022.1">
    <property type="nucleotide sequence ID" value="NC_002953.3"/>
</dbReference>
<dbReference type="SMR" id="Q6G6V7"/>
<dbReference type="KEGG" id="sas:SAS2254"/>
<dbReference type="HOGENOM" id="CLU_106729_4_0_9"/>
<dbReference type="GO" id="GO:0005737">
    <property type="term" value="C:cytoplasm"/>
    <property type="evidence" value="ECO:0007669"/>
    <property type="project" value="UniProtKB-SubCell"/>
</dbReference>
<dbReference type="GO" id="GO:0003677">
    <property type="term" value="F:DNA binding"/>
    <property type="evidence" value="ECO:0007669"/>
    <property type="project" value="UniProtKB-KW"/>
</dbReference>
<dbReference type="GO" id="GO:0000156">
    <property type="term" value="F:phosphorelay response regulator activity"/>
    <property type="evidence" value="ECO:0007669"/>
    <property type="project" value="InterPro"/>
</dbReference>
<dbReference type="Gene3D" id="2.40.50.1020">
    <property type="entry name" value="LytTr DNA-binding domain"/>
    <property type="match status" value="1"/>
</dbReference>
<dbReference type="InterPro" id="IPR046947">
    <property type="entry name" value="LytR-like"/>
</dbReference>
<dbReference type="InterPro" id="IPR007492">
    <property type="entry name" value="LytTR_DNA-bd_dom"/>
</dbReference>
<dbReference type="PANTHER" id="PTHR37299:SF2">
    <property type="entry name" value="HTH LYTTR-TYPE DOMAIN-CONTAINING PROTEIN"/>
    <property type="match status" value="1"/>
</dbReference>
<dbReference type="PANTHER" id="PTHR37299">
    <property type="entry name" value="TRANSCRIPTIONAL REGULATOR-RELATED"/>
    <property type="match status" value="1"/>
</dbReference>
<dbReference type="Pfam" id="PF04397">
    <property type="entry name" value="LytTR"/>
    <property type="match status" value="1"/>
</dbReference>
<dbReference type="SMART" id="SM00850">
    <property type="entry name" value="LytTR"/>
    <property type="match status" value="1"/>
</dbReference>
<dbReference type="PROSITE" id="PS50930">
    <property type="entry name" value="HTH_LYTTR"/>
    <property type="match status" value="1"/>
</dbReference>
<gene>
    <name type="ordered locus">SAS2254</name>
</gene>
<comment type="subcellular location">
    <subcellularLocation>
        <location evidence="2">Cytoplasm</location>
    </subcellularLocation>
</comment>
<sequence>MMKLNLFINAKETESYIDIHAPKMNDHVQSIINAVNDLDKSHTLVGYIDKEIHIINVSDVITFQVINKNVTAITSNQKFKLKLRLYELEKQLPQHFIRISKSEIVNKYYIEKLLLEPNGLIRMYLKDAHYTYSSRRYLKSIKERLSI</sequence>
<protein>
    <recommendedName>
        <fullName>Uncharacterized HTH-type transcriptional regulator SAS2254</fullName>
    </recommendedName>
</protein>
<feature type="chain" id="PRO_0000298603" description="Uncharacterized HTH-type transcriptional regulator SAS2254">
    <location>
        <begin position="1"/>
        <end position="147"/>
    </location>
</feature>
<feature type="domain" description="HTH LytTR-type" evidence="1">
    <location>
        <begin position="44"/>
        <end position="147"/>
    </location>
</feature>
<proteinExistence type="predicted"/>
<reference key="1">
    <citation type="journal article" date="2004" name="Proc. Natl. Acad. Sci. U.S.A.">
        <title>Complete genomes of two clinical Staphylococcus aureus strains: evidence for the rapid evolution of virulence and drug resistance.</title>
        <authorList>
            <person name="Holden M.T.G."/>
            <person name="Feil E.J."/>
            <person name="Lindsay J.A."/>
            <person name="Peacock S.J."/>
            <person name="Day N.P.J."/>
            <person name="Enright M.C."/>
            <person name="Foster T.J."/>
            <person name="Moore C.E."/>
            <person name="Hurst L."/>
            <person name="Atkin R."/>
            <person name="Barron A."/>
            <person name="Bason N."/>
            <person name="Bentley S.D."/>
            <person name="Chillingworth C."/>
            <person name="Chillingworth T."/>
            <person name="Churcher C."/>
            <person name="Clark L."/>
            <person name="Corton C."/>
            <person name="Cronin A."/>
            <person name="Doggett J."/>
            <person name="Dowd L."/>
            <person name="Feltwell T."/>
            <person name="Hance Z."/>
            <person name="Harris B."/>
            <person name="Hauser H."/>
            <person name="Holroyd S."/>
            <person name="Jagels K."/>
            <person name="James K.D."/>
            <person name="Lennard N."/>
            <person name="Line A."/>
            <person name="Mayes R."/>
            <person name="Moule S."/>
            <person name="Mungall K."/>
            <person name="Ormond D."/>
            <person name="Quail M.A."/>
            <person name="Rabbinowitsch E."/>
            <person name="Rutherford K.M."/>
            <person name="Sanders M."/>
            <person name="Sharp S."/>
            <person name="Simmonds M."/>
            <person name="Stevens K."/>
            <person name="Whitehead S."/>
            <person name="Barrell B.G."/>
            <person name="Spratt B.G."/>
            <person name="Parkhill J."/>
        </authorList>
    </citation>
    <scope>NUCLEOTIDE SEQUENCE [LARGE SCALE GENOMIC DNA]</scope>
    <source>
        <strain>MSSA476</strain>
    </source>
</reference>
<accession>Q6G6V7</accession>
<name>Y2254_STAAS</name>